<sequence>MLLLKHGTIEILDQNTMYGWYELPKQEFWNGEQPEPITHYIKQFPLMKHVNPLENQKCACPMKWLLLSAPITNHWFN</sequence>
<comment type="subcellular location">
    <subcellularLocation>
        <location>Plastid</location>
        <location>Chloroplast</location>
    </subcellularLocation>
</comment>
<comment type="similarity">
    <text evidence="1">Belongs to the ycf15 family.</text>
</comment>
<comment type="caution">
    <text evidence="1">Could be the product of a pseudogene.</text>
</comment>
<dbReference type="EMBL" id="AJ627251">
    <property type="protein sequence ID" value="CAF28639.1"/>
    <property type="molecule type" value="Genomic_DNA"/>
</dbReference>
<dbReference type="EMBL" id="AJ627251">
    <property type="protein sequence ID" value="CAF28658.1"/>
    <property type="molecule type" value="Genomic_DNA"/>
</dbReference>
<dbReference type="GO" id="GO:0009507">
    <property type="term" value="C:chloroplast"/>
    <property type="evidence" value="ECO:0007669"/>
    <property type="project" value="UniProtKB-SubCell"/>
</dbReference>
<dbReference type="InterPro" id="IPR019645">
    <property type="entry name" value="Uncharacterised_Ycf15"/>
</dbReference>
<dbReference type="Pfam" id="PF10705">
    <property type="entry name" value="Ycf15"/>
    <property type="match status" value="1"/>
</dbReference>
<feature type="chain" id="PRO_0000360391" description="Putative uncharacterized protein ycf15">
    <location>
        <begin position="1"/>
        <end position="77"/>
    </location>
</feature>
<protein>
    <recommendedName>
        <fullName>Putative uncharacterized protein ycf15</fullName>
    </recommendedName>
</protein>
<gene>
    <name type="primary">ycf15-A</name>
</gene>
<gene>
    <name type="primary">ycf15-B</name>
</gene>
<keyword id="KW-0150">Chloroplast</keyword>
<keyword id="KW-0934">Plastid</keyword>
<evidence type="ECO:0000305" key="1"/>
<reference key="1">
    <citation type="journal article" date="2004" name="Mol. Biol. Evol.">
        <title>The chloroplast genome of Nymphaea alba: whole-genome analyses and the problem of identifying the most basal angiosperm.</title>
        <authorList>
            <person name="Goremykin V.V."/>
            <person name="Hirsch-Ernst K.I."/>
            <person name="Woelfl S."/>
            <person name="Hellwig F.H."/>
        </authorList>
    </citation>
    <scope>NUCLEOTIDE SEQUENCE [LARGE SCALE GENOMIC DNA]</scope>
</reference>
<accession>Q6EVY8</accession>
<proteinExistence type="uncertain"/>
<organism>
    <name type="scientific">Nymphaea alba</name>
    <name type="common">White water-lily</name>
    <name type="synonym">Castalia alba</name>
    <dbReference type="NCBI Taxonomy" id="34301"/>
    <lineage>
        <taxon>Eukaryota</taxon>
        <taxon>Viridiplantae</taxon>
        <taxon>Streptophyta</taxon>
        <taxon>Embryophyta</taxon>
        <taxon>Tracheophyta</taxon>
        <taxon>Spermatophyta</taxon>
        <taxon>Magnoliopsida</taxon>
        <taxon>Nymphaeales</taxon>
        <taxon>Nymphaeaceae</taxon>
        <taxon>Nymphaea</taxon>
    </lineage>
</organism>
<geneLocation type="chloroplast"/>
<name>YCF15_NYMAL</name>